<dbReference type="EMBL" id="MH447526">
    <property type="protein sequence ID" value="AXQ00106.1"/>
    <property type="molecule type" value="Genomic_DNA"/>
</dbReference>
<dbReference type="PDB" id="6D5F">
    <property type="method" value="EM"/>
    <property type="resolution" value="3.70 A"/>
    <property type="chains" value="A/B/C/D=2-140"/>
</dbReference>
<dbReference type="PDBsum" id="6D5F"/>
<dbReference type="EMDB" id="EMD-7797"/>
<dbReference type="SMR" id="A0A346LU63"/>
<dbReference type="Proteomes" id="UP000263690">
    <property type="component" value="Genome"/>
</dbReference>
<dbReference type="GO" id="GO:0019029">
    <property type="term" value="C:helical viral capsid"/>
    <property type="evidence" value="ECO:0000314"/>
    <property type="project" value="UniProtKB"/>
</dbReference>
<dbReference type="GO" id="GO:0003677">
    <property type="term" value="F:DNA binding"/>
    <property type="evidence" value="ECO:0000314"/>
    <property type="project" value="UniProtKB"/>
</dbReference>
<sequence length="199" mass="21998">MARKRTSKNDPLRMYLNYVRKLQTMGDAYDESAKYRIANFENGFKSLHMVENEFKQYLANVIDEAIKSGASPQDLPYVNEIKLALMKIFTSWLKYSNEKLGANEIAINVAGTATMTLTENLYGTRVSCEEAVSLINSIFAVWVGVEPFEAEEREGACLVTPRSPLPPVPISSPTGFSAPIQEVLQAKSPEEIIGVKGGA</sequence>
<feature type="chain" id="PRO_0000453808" description="Major capsid protein VP5">
    <location>
        <begin position="1"/>
        <end position="199"/>
    </location>
</feature>
<comment type="function">
    <text evidence="1 4">Self-assembles to form a helical, filamentous nucleocapsid (Probable) (PubMed:30135568). Together with capsid protein 1, wraps arounds the DNA and maintains it in an A-form (Probable) (PubMed:30135568). Capsid proteins probably maintain the DNA in A-form by non-specific desolvation and specific coordination of the DNA phosphate groups by positively charged residues (Probable) (PubMed:30135568). This certainly protects the viral DNA under conditions such as the extreme desiccation of its host (Probable).</text>
</comment>
<comment type="subunit">
    <text evidence="1 2">Heterodimer composed of major capsid protein VP4 and major capsid protein VP5.</text>
</comment>
<comment type="subcellular location">
    <subcellularLocation>
        <location evidence="2">Virion</location>
    </subcellularLocation>
</comment>
<comment type="domain">
    <text evidence="1 2">The N-terminus projects into a DNA groove.</text>
</comment>
<keyword id="KW-0002">3D-structure</keyword>
<keyword id="KW-0238">DNA-binding</keyword>
<keyword id="KW-1185">Reference proteome</keyword>
<keyword id="KW-0946">Virion</keyword>
<protein>
    <recommendedName>
        <fullName evidence="3">Major capsid protein VP5</fullName>
    </recommendedName>
</protein>
<organismHost>
    <name type="scientific">Saccharolobus shibatae</name>
    <dbReference type="NCBI Taxonomy" id="2286"/>
</organismHost>
<accession>A0A346LU63</accession>
<reference key="1">
    <citation type="journal article" date="2018" name="Nat. Commun.">
        <title>Structural conservation in a membrane-enveloped filamentous virus infecting a hyperthermophilic acidophile.</title>
        <authorList>
            <person name="Liu Y."/>
            <person name="Osinski T."/>
            <person name="Wang F."/>
            <person name="Krupovic M."/>
            <person name="Schouten S."/>
            <person name="Kasson P."/>
            <person name="Prangishvili D."/>
            <person name="Egelman E.H."/>
        </authorList>
    </citation>
    <scope>NUCLEOTIDE SEQUENCE [LARGE SCALE GENOMIC DNA]</scope>
    <scope>FUNCTION</scope>
    <scope>STRUCTURE BY ELECTRON MICROSCOPY (3.70 ANGSTROMS)</scope>
    <scope>SUBUNIT</scope>
    <scope>DOMAIN</scope>
    <source>
        <strain evidence="5">S48</strain>
    </source>
</reference>
<reference key="2">
    <citation type="journal article" date="2020" name="Proc. Natl. Acad. Sci. U.S.A.">
        <title>Structures of filamentous viruses infecting hyperthermophilic archaea explain DNA stabilization in extreme environments.</title>
        <authorList>
            <person name="Wang F."/>
            <person name="Baquero D.P."/>
            <person name="Beltran L.C."/>
            <person name="Su Z."/>
            <person name="Osinski T."/>
            <person name="Zheng W."/>
            <person name="Prangishvili D."/>
            <person name="Krupovic M."/>
            <person name="Egelman E.H."/>
        </authorList>
    </citation>
    <scope>SUBUNIT</scope>
    <scope>FUNCTION</scope>
    <scope>SUBCELLULAR LOCATION</scope>
    <scope>DOMAIN</scope>
</reference>
<name>CAPS2_SUFV1</name>
<evidence type="ECO:0000269" key="1">
    <source>
    </source>
</evidence>
<evidence type="ECO:0000269" key="2">
    <source>
    </source>
</evidence>
<evidence type="ECO:0000303" key="3">
    <source>
    </source>
</evidence>
<evidence type="ECO:0000305" key="4">
    <source>
    </source>
</evidence>
<evidence type="ECO:0000312" key="5">
    <source>
        <dbReference type="EMBL" id="AXQ00106.1"/>
    </source>
</evidence>
<proteinExistence type="evidence at protein level"/>
<organism>
    <name type="scientific">Sulfolobus filamentous virus 1</name>
    <name type="common">SFV1</name>
    <name type="synonym">Sulfolobus virus SFV-1</name>
    <dbReference type="NCBI Taxonomy" id="2304198"/>
    <lineage>
        <taxon>Viruses</taxon>
        <taxon>Adnaviria</taxon>
        <taxon>Zilligvirae</taxon>
        <taxon>Taleaviricota</taxon>
        <taxon>Tokiviricetes</taxon>
        <taxon>Ligamenvirales</taxon>
        <taxon>Lipothrixviridae</taxon>
        <taxon>Alphalipothrixvirus</taxon>
        <taxon>Alphalipothrixvirus beppuense</taxon>
    </lineage>
</organism>
<gene>
    <name evidence="5" type="ORF">SFV1gp24</name>
</gene>